<organism>
    <name type="scientific">Pseudomonas aeruginosa (strain ATCC 15692 / DSM 22644 / CIP 104116 / JCM 14847 / LMG 12228 / 1C / PRS 101 / PAO1)</name>
    <dbReference type="NCBI Taxonomy" id="208964"/>
    <lineage>
        <taxon>Bacteria</taxon>
        <taxon>Pseudomonadati</taxon>
        <taxon>Pseudomonadota</taxon>
        <taxon>Gammaproteobacteria</taxon>
        <taxon>Pseudomonadales</taxon>
        <taxon>Pseudomonadaceae</taxon>
        <taxon>Pseudomonas</taxon>
    </lineage>
</organism>
<proteinExistence type="predicted"/>
<keyword id="KW-0010">Activator</keyword>
<keyword id="KW-0016">Alginate biosynthesis</keyword>
<keyword id="KW-0238">DNA-binding</keyword>
<keyword id="KW-1185">Reference proteome</keyword>
<keyword id="KW-0677">Repeat</keyword>
<keyword id="KW-0804">Transcription</keyword>
<keyword id="KW-0805">Transcription regulation</keyword>
<dbReference type="EMBL" id="M30145">
    <property type="protein sequence ID" value="AAA25724.1"/>
    <property type="molecule type" value="Genomic_DNA"/>
</dbReference>
<dbReference type="EMBL" id="M35259">
    <property type="protein sequence ID" value="AAA25705.1"/>
    <property type="molecule type" value="Genomic_DNA"/>
</dbReference>
<dbReference type="EMBL" id="M57551">
    <property type="protein sequence ID" value="AAA25703.1"/>
    <property type="molecule type" value="Genomic_DNA"/>
</dbReference>
<dbReference type="EMBL" id="M32077">
    <property type="protein sequence ID" value="AAA72068.1"/>
    <property type="molecule type" value="Unassigned_DNA"/>
</dbReference>
<dbReference type="EMBL" id="AE004091">
    <property type="protein sequence ID" value="AAG08638.1"/>
    <property type="molecule type" value="Genomic_DNA"/>
</dbReference>
<dbReference type="PIR" id="A35630">
    <property type="entry name" value="A35630"/>
</dbReference>
<dbReference type="PIR" id="A36128">
    <property type="entry name" value="A36128"/>
</dbReference>
<dbReference type="PIR" id="G82990">
    <property type="entry name" value="G82990"/>
</dbReference>
<dbReference type="RefSeq" id="NP_253940.1">
    <property type="nucleotide sequence ID" value="NC_002516.2"/>
</dbReference>
<dbReference type="RefSeq" id="WP_003115263.1">
    <property type="nucleotide sequence ID" value="NZ_QZGE01000002.1"/>
</dbReference>
<dbReference type="SMR" id="P15276"/>
<dbReference type="STRING" id="208964.PA5253"/>
<dbReference type="PaxDb" id="208964-PA5253"/>
<dbReference type="DNASU" id="880806"/>
<dbReference type="GeneID" id="880806"/>
<dbReference type="KEGG" id="pae:PA5253"/>
<dbReference type="PATRIC" id="fig|208964.12.peg.5506"/>
<dbReference type="PseudoCAP" id="PA5253"/>
<dbReference type="HOGENOM" id="CLU_070312_0_0_6"/>
<dbReference type="InParanoid" id="P15276"/>
<dbReference type="OrthoDB" id="7033769at2"/>
<dbReference type="BioCyc" id="PAER208964:G1FZ6-5374-MONOMER"/>
<dbReference type="Proteomes" id="UP000002438">
    <property type="component" value="Chromosome"/>
</dbReference>
<dbReference type="GO" id="GO:0003677">
    <property type="term" value="F:DNA binding"/>
    <property type="evidence" value="ECO:0007669"/>
    <property type="project" value="UniProtKB-KW"/>
</dbReference>
<dbReference type="GO" id="GO:0042121">
    <property type="term" value="P:alginic acid biosynthetic process"/>
    <property type="evidence" value="ECO:0000315"/>
    <property type="project" value="PseudoCAP"/>
</dbReference>
<dbReference type="GO" id="GO:0006355">
    <property type="term" value="P:regulation of DNA-templated transcription"/>
    <property type="evidence" value="ECO:0000315"/>
    <property type="project" value="PseudoCAP"/>
</dbReference>
<dbReference type="GO" id="GO:1900190">
    <property type="term" value="P:regulation of single-species biofilm formation"/>
    <property type="evidence" value="ECO:0000303"/>
    <property type="project" value="PseudoCAP"/>
</dbReference>
<dbReference type="InterPro" id="IPR047725">
    <property type="entry name" value="AlgP_N"/>
</dbReference>
<dbReference type="InterPro" id="IPR051860">
    <property type="entry name" value="Plasmodium_CSP_Invasion"/>
</dbReference>
<dbReference type="NCBIfam" id="NF038178">
    <property type="entry name" value="AlgP_Nterm"/>
    <property type="match status" value="1"/>
</dbReference>
<dbReference type="PANTHER" id="PTHR44826">
    <property type="entry name" value="SPORE COAT PROTEIN SP85"/>
    <property type="match status" value="1"/>
</dbReference>
<dbReference type="PANTHER" id="PTHR44826:SF3">
    <property type="entry name" value="SPORE COAT PROTEIN SP85"/>
    <property type="match status" value="1"/>
</dbReference>
<feature type="chain" id="PRO_0000064555" description="Transcriptional regulatory protein AlgP">
    <location>
        <begin position="1"/>
        <end position="352"/>
    </location>
</feature>
<feature type="region of interest" description="Disordered" evidence="1">
    <location>
        <begin position="128"/>
        <end position="352"/>
    </location>
</feature>
<feature type="compositionally biased region" description="Low complexity" evidence="1">
    <location>
        <begin position="138"/>
        <end position="341"/>
    </location>
</feature>
<feature type="sequence conflict" description="In Ref. 4; AAA72068." evidence="2" ref="4">
    <original>G</original>
    <variation>D</variation>
    <location>
        <position position="28"/>
    </location>
</feature>
<feature type="sequence conflict" description="In Ref. 1 and 2." evidence="2" ref="1 2">
    <original>KP</original>
    <variation>NA</variation>
    <location>
        <begin position="157"/>
        <end position="158"/>
    </location>
</feature>
<feature type="sequence conflict" description="In Ref. 3." evidence="2" ref="3">
    <original>P</original>
    <variation>R</variation>
    <location>
        <position position="158"/>
    </location>
</feature>
<feature type="sequence conflict" description="In Ref. 1, 2 and 3." evidence="2" ref="1 2 3">
    <location>
        <begin position="173"/>
        <end position="176"/>
    </location>
</feature>
<feature type="sequence conflict" description="In Ref. 4; AAA72068." evidence="2" ref="4">
    <original>A</original>
    <variation>T</variation>
    <location>
        <position position="176"/>
    </location>
</feature>
<feature type="sequence conflict" description="In Ref. 3 and 4." evidence="2" ref="3 4">
    <original>A</original>
    <variation>G</variation>
    <location>
        <position position="181"/>
    </location>
</feature>
<feature type="sequence conflict" description="In Ref. 1, 2 and 3." evidence="2" ref="1 2 3">
    <original>T</original>
    <variation>A</variation>
    <location>
        <position position="188"/>
    </location>
</feature>
<feature type="sequence conflict" description="In Ref. 1 and 2." evidence="2" ref="1 2">
    <original>KP</original>
    <variation>NA</variation>
    <location>
        <begin position="223"/>
        <end position="224"/>
    </location>
</feature>
<feature type="sequence conflict" description="In Ref. 1, 2 and 3." evidence="2" ref="1 2 3">
    <original>T</original>
    <variation>A</variation>
    <location>
        <position position="246"/>
    </location>
</feature>
<feature type="sequence conflict" description="In Ref. 1, 2 and 3." evidence="2" ref="1 2 3">
    <original>PA</original>
    <variation>HV</variation>
    <location>
        <begin position="266"/>
        <end position="267"/>
    </location>
</feature>
<feature type="sequence conflict" description="In Ref. 1, 2 and 3." evidence="2" ref="1 2 3">
    <location>
        <begin position="273"/>
        <end position="280"/>
    </location>
</feature>
<feature type="sequence conflict" description="In Ref. 1 and 2." evidence="2" ref="1 2">
    <original>KP</original>
    <variation>NA</variation>
    <location>
        <begin position="290"/>
        <end position="291"/>
    </location>
</feature>
<feature type="sequence conflict" description="In Ref. 1, 2 and 3." evidence="2" ref="1 2 3">
    <original>T</original>
    <variation>A</variation>
    <location>
        <position position="311"/>
    </location>
</feature>
<feature type="sequence conflict" description="In Ref. 1 and 2." evidence="2" ref="1 2">
    <original>KP</original>
    <variation>NA</variation>
    <location>
        <begin position="320"/>
        <end position="321"/>
    </location>
</feature>
<comment type="function">
    <text>The promoter for a critical alginate biosynthetic gene, AlgD, encoding GDP-mannose dehydrogenase, is activated only under conditions reminiscent of the cystic fibrosis lung (i.e. under high osmolarity), and at least two regulatory genes, AlgP and AlgQ, have been implicated in this activation process.</text>
</comment>
<comment type="domain">
    <text>The C-terminal domain binds to DNA. It is unknown whether binding is specific or non-specific.</text>
</comment>
<reference key="1">
    <citation type="journal article" date="1989" name="Gene">
        <title>Nucleotide sequence of a regulatory region controlling alginate synthesis in Pseudomonas aeruginosa: characterization of the algR2 gene.</title>
        <authorList>
            <person name="Kato J."/>
            <person name="Chu L."/>
            <person name="Kitano K."/>
            <person name="Devault J.D."/>
            <person name="Kimbara K."/>
            <person name="Chakrabarty A.M."/>
            <person name="Misra T.K."/>
        </authorList>
    </citation>
    <scope>NUCLEOTIDE SEQUENCE [GENOMIC DNA]</scope>
    <source>
        <strain>8822</strain>
    </source>
</reference>
<reference key="2">
    <citation type="journal article" date="1990" name="Proc. Natl. Acad. Sci. U.S.A.">
        <title>AlgR3, a protein resembling eukaryotic histone H1, regulates alginate synthesis in Pseudomonas aeruginosa.</title>
        <authorList>
            <person name="Kato J."/>
            <person name="Misra T.K."/>
            <person name="Chakrabarty A.M."/>
        </authorList>
    </citation>
    <scope>NUCLEOTIDE SEQUENCE [GENOMIC DNA]</scope>
    <source>
        <strain>8882</strain>
    </source>
</reference>
<reference key="3">
    <citation type="journal article" date="1990" name="J. Bacteriol.">
        <title>A procaryotic regulatory factor with a histone H1-like carboxy-terminal domain: clonal variation of repeats within algP, a gene involved in regulation of mucoidy in Pseudomonas aeruginosa.</title>
        <authorList>
            <person name="Deretic V."/>
            <person name="Konyecsni W.M."/>
        </authorList>
    </citation>
    <scope>NUCLEOTIDE SEQUENCE [GENOMIC DNA]</scope>
    <source>
        <strain>8830</strain>
    </source>
</reference>
<reference key="4">
    <citation type="journal article" date="1990" name="J. Bacteriol.">
        <title>DNA sequence and expression analysis of algP and algQ, components of the multigene system transcriptionally regulating mucoidy in Pseudomonas aeruginosa: algP contains multiple direct repeats.</title>
        <authorList>
            <person name="Konyecsni W.M."/>
            <person name="Deretic V."/>
        </authorList>
    </citation>
    <scope>NUCLEOTIDE SEQUENCE [GENOMIC DNA]</scope>
    <source>
        <strain>PAO / PA02003</strain>
    </source>
</reference>
<reference key="5">
    <citation type="journal article" date="2000" name="Nature">
        <title>Complete genome sequence of Pseudomonas aeruginosa PAO1, an opportunistic pathogen.</title>
        <authorList>
            <person name="Stover C.K."/>
            <person name="Pham X.-Q.T."/>
            <person name="Erwin A.L."/>
            <person name="Mizoguchi S.D."/>
            <person name="Warrener P."/>
            <person name="Hickey M.J."/>
            <person name="Brinkman F.S.L."/>
            <person name="Hufnagle W.O."/>
            <person name="Kowalik D.J."/>
            <person name="Lagrou M."/>
            <person name="Garber R.L."/>
            <person name="Goltry L."/>
            <person name="Tolentino E."/>
            <person name="Westbrock-Wadman S."/>
            <person name="Yuan Y."/>
            <person name="Brody L.L."/>
            <person name="Coulter S.N."/>
            <person name="Folger K.R."/>
            <person name="Kas A."/>
            <person name="Larbig K."/>
            <person name="Lim R.M."/>
            <person name="Smith K.A."/>
            <person name="Spencer D.H."/>
            <person name="Wong G.K.-S."/>
            <person name="Wu Z."/>
            <person name="Paulsen I.T."/>
            <person name="Reizer J."/>
            <person name="Saier M.H. Jr."/>
            <person name="Hancock R.E.W."/>
            <person name="Lory S."/>
            <person name="Olson M.V."/>
        </authorList>
    </citation>
    <scope>NUCLEOTIDE SEQUENCE [LARGE SCALE GENOMIC DNA]</scope>
    <source>
        <strain>ATCC 15692 / DSM 22644 / CIP 104116 / JCM 14847 / LMG 12228 / 1C / PRS 101 / PAO1</strain>
    </source>
</reference>
<accession>P15276</accession>
<accession>Q9HTU1</accession>
<protein>
    <recommendedName>
        <fullName>Transcriptional regulatory protein AlgP</fullName>
    </recommendedName>
    <alternativeName>
        <fullName>Alginate regulatory protein AlgR3</fullName>
    </alternativeName>
</protein>
<gene>
    <name type="primary">algP</name>
    <name type="synonym">algR3</name>
    <name type="ordered locus">PA5253</name>
</gene>
<sequence>MSANKKPVTTPLHLLQQLSHSLVEHLEGACKQALVDSEKLLAKLEKQRGKAQEKLHKARTKLQDAAKAGKTKAQAKARETISDLEEALDTLKARQADTRTYIVGLKRDVQESLKLAQGVGKVKEAAGKALESRKAKPATKPAAKAAAKPAVKTVAAKPAAKPAAKPAAKPAAKPAAKTAAAKPAAKPTAKPAAKPAAKPAAKTAAAKPAAKPAAKPVAKPAAKPAAKTAAAKPAAKPAAKPVAKPTAKPAAKTAAAKPAAKPAAKPAAKPAAKPVAKSAAAKPAAKPAAKPAAKPAAKPAAKPVAAKPAATKPATAPAAKPAATPSAPAAASSAASATPAAGSNGAAPTSAS</sequence>
<name>ALGP_PSEAE</name>
<evidence type="ECO:0000256" key="1">
    <source>
        <dbReference type="SAM" id="MobiDB-lite"/>
    </source>
</evidence>
<evidence type="ECO:0000305" key="2"/>